<proteinExistence type="evidence at protein level"/>
<sequence>MERDRITALKRSFEVEEIEPPNSTPPRRVQTPLLRATVASSSQKFQDLGVKNSEPAARLVDTLSQRSPKPSLRRVDLAGAKAPEPMSRRTELSIDISSKQVESTASTPGPSRFGLKRAEVLGHKTPEPVPRRTEITIVKPQESGLRRVETPASKAPEGSAMPVTDAAPKRVEIQVPKPAEAPNCPLPPQTLENSEAPMSQLQSRLEPRPPVTEVPYRNQEDSEVAPSCVVDMADNPRDAMLKQAPVSRNEKAPVDFGYVGIDSILEQMRRKAMKQGFEFNIMVVGQSGLGKSTLINTLFKSKISRKSVQPISEERIPKTIEIKSITHDIEEKGVRMKLTVIDTPGFGDHINNENCWQPIMKFINDQYEKYLQEEVNINRKKRIPDTRVHCCLYFIPATGHSLRPLDIEFMKRLSKVVNIVPVIAKADTLTLEERVYFKQRITSDLLSNGIDVYPQKEFDEAEDRLVNEKFREMIPFAVVGSDHEYQVNGKRILGRKTKWGTIEVENTTHCEFAYLRDLLIRTHMQNIKDITSNIHFEAYRVKRLNEGNSAMANGIEKEPETQEM</sequence>
<gene>
    <name evidence="3" type="primary">Septin9</name>
    <name evidence="13" type="synonym">Sept9</name>
</gene>
<name>SEPT9_RAT</name>
<evidence type="ECO:0000250" key="1"/>
<evidence type="ECO:0000250" key="2">
    <source>
        <dbReference type="UniProtKB" id="Q80UG5"/>
    </source>
</evidence>
<evidence type="ECO:0000250" key="3">
    <source>
        <dbReference type="UniProtKB" id="Q9UHD8"/>
    </source>
</evidence>
<evidence type="ECO:0000255" key="4">
    <source>
        <dbReference type="PROSITE-ProRule" id="PRU01056"/>
    </source>
</evidence>
<evidence type="ECO:0000256" key="5">
    <source>
        <dbReference type="SAM" id="MobiDB-lite"/>
    </source>
</evidence>
<evidence type="ECO:0000269" key="6">
    <source>
    </source>
</evidence>
<evidence type="ECO:0000269" key="7">
    <source>
    </source>
</evidence>
<evidence type="ECO:0000269" key="8">
    <source>
    </source>
</evidence>
<evidence type="ECO:0000269" key="9">
    <source>
    </source>
</evidence>
<evidence type="ECO:0000303" key="10">
    <source>
    </source>
</evidence>
<evidence type="ECO:0000303" key="11">
    <source>
    </source>
</evidence>
<evidence type="ECO:0000305" key="12"/>
<evidence type="ECO:0000312" key="13">
    <source>
        <dbReference type="RGD" id="708523"/>
    </source>
</evidence>
<evidence type="ECO:0007744" key="14">
    <source>
    </source>
</evidence>
<evidence type="ECO:0007744" key="15">
    <source>
    </source>
</evidence>
<dbReference type="EMBL" id="AF180525">
    <property type="protein sequence ID" value="AAF01206.1"/>
    <property type="molecule type" value="mRNA"/>
</dbReference>
<dbReference type="EMBL" id="AF180526">
    <property type="protein sequence ID" value="AAF01207.1"/>
    <property type="molecule type" value="mRNA"/>
</dbReference>
<dbReference type="EMBL" id="AF170253">
    <property type="protein sequence ID" value="AAF03376.1"/>
    <property type="molecule type" value="mRNA"/>
</dbReference>
<dbReference type="EMBL" id="AF173899">
    <property type="protein sequence ID" value="AAF03391.1"/>
    <property type="molecule type" value="mRNA"/>
</dbReference>
<dbReference type="PIR" id="JC7365">
    <property type="entry name" value="JC7365"/>
</dbReference>
<dbReference type="RefSeq" id="NP_001106969.1">
    <property type="nucleotide sequence ID" value="NM_001113497.1"/>
</dbReference>
<dbReference type="RefSeq" id="NP_114025.2">
    <property type="nucleotide sequence ID" value="NM_031837.2"/>
</dbReference>
<dbReference type="RefSeq" id="NP_789826.2">
    <property type="nucleotide sequence ID" value="NM_176856.2"/>
</dbReference>
<dbReference type="SMR" id="Q9QZR6"/>
<dbReference type="BioGRID" id="249831">
    <property type="interactions" value="2"/>
</dbReference>
<dbReference type="CORUM" id="Q9QZR6"/>
<dbReference type="FunCoup" id="Q9QZR6">
    <property type="interactions" value="1209"/>
</dbReference>
<dbReference type="IntAct" id="Q9QZR6">
    <property type="interactions" value="5"/>
</dbReference>
<dbReference type="STRING" id="10116.ENSRNOP00000003891"/>
<dbReference type="ChEMBL" id="CHEMBL2176803"/>
<dbReference type="GlyGen" id="Q9QZR6">
    <property type="glycosylation" value="2 sites"/>
</dbReference>
<dbReference type="iPTMnet" id="Q9QZR6"/>
<dbReference type="PhosphoSitePlus" id="Q9QZR6"/>
<dbReference type="jPOST" id="Q9QZR6"/>
<dbReference type="PaxDb" id="10116-ENSRNOP00000003891"/>
<dbReference type="PeptideAtlas" id="Q9QZR6"/>
<dbReference type="GeneID" id="83788"/>
<dbReference type="KEGG" id="rno:83788"/>
<dbReference type="AGR" id="RGD:708523"/>
<dbReference type="CTD" id="10801"/>
<dbReference type="RGD" id="708523">
    <property type="gene designation" value="Septin9"/>
</dbReference>
<dbReference type="eggNOG" id="KOG1547">
    <property type="taxonomic scope" value="Eukaryota"/>
</dbReference>
<dbReference type="InParanoid" id="Q9QZR6"/>
<dbReference type="PhylomeDB" id="Q9QZR6"/>
<dbReference type="PRO" id="PR:Q9QZR6"/>
<dbReference type="Proteomes" id="UP000002494">
    <property type="component" value="Unplaced"/>
</dbReference>
<dbReference type="GO" id="GO:0005930">
    <property type="term" value="C:axoneme"/>
    <property type="evidence" value="ECO:0000266"/>
    <property type="project" value="RGD"/>
</dbReference>
<dbReference type="GO" id="GO:0032153">
    <property type="term" value="C:cell division site"/>
    <property type="evidence" value="ECO:0000318"/>
    <property type="project" value="GO_Central"/>
</dbReference>
<dbReference type="GO" id="GO:0032839">
    <property type="term" value="C:dendrite cytoplasm"/>
    <property type="evidence" value="ECO:0007669"/>
    <property type="project" value="GOC"/>
</dbReference>
<dbReference type="GO" id="GO:0005874">
    <property type="term" value="C:microtubule"/>
    <property type="evidence" value="ECO:0000266"/>
    <property type="project" value="RGD"/>
</dbReference>
<dbReference type="GO" id="GO:0015630">
    <property type="term" value="C:microtubule cytoskeleton"/>
    <property type="evidence" value="ECO:0000318"/>
    <property type="project" value="GO_Central"/>
</dbReference>
<dbReference type="GO" id="GO:0097730">
    <property type="term" value="C:non-motile cilium"/>
    <property type="evidence" value="ECO:0000266"/>
    <property type="project" value="RGD"/>
</dbReference>
<dbReference type="GO" id="GO:0048471">
    <property type="term" value="C:perinuclear region of cytoplasm"/>
    <property type="evidence" value="ECO:0000266"/>
    <property type="project" value="RGD"/>
</dbReference>
<dbReference type="GO" id="GO:0098793">
    <property type="term" value="C:presynapse"/>
    <property type="evidence" value="ECO:0000314"/>
    <property type="project" value="SynGO"/>
</dbReference>
<dbReference type="GO" id="GO:0031105">
    <property type="term" value="C:septin complex"/>
    <property type="evidence" value="ECO:0000250"/>
    <property type="project" value="UniProtKB"/>
</dbReference>
<dbReference type="GO" id="GO:0005940">
    <property type="term" value="C:septin ring"/>
    <property type="evidence" value="ECO:0000318"/>
    <property type="project" value="GO_Central"/>
</dbReference>
<dbReference type="GO" id="GO:0001725">
    <property type="term" value="C:stress fiber"/>
    <property type="evidence" value="ECO:0000266"/>
    <property type="project" value="RGD"/>
</dbReference>
<dbReference type="GO" id="GO:0005525">
    <property type="term" value="F:GTP binding"/>
    <property type="evidence" value="ECO:0007669"/>
    <property type="project" value="UniProtKB-KW"/>
</dbReference>
<dbReference type="GO" id="GO:0003924">
    <property type="term" value="F:GTPase activity"/>
    <property type="evidence" value="ECO:0000318"/>
    <property type="project" value="GO_Central"/>
</dbReference>
<dbReference type="GO" id="GO:0060090">
    <property type="term" value="F:molecular adaptor activity"/>
    <property type="evidence" value="ECO:0000318"/>
    <property type="project" value="GO_Central"/>
</dbReference>
<dbReference type="GO" id="GO:0098971">
    <property type="term" value="P:anterograde dendritic transport of neurotransmitter receptor complex"/>
    <property type="evidence" value="ECO:0000314"/>
    <property type="project" value="SynGO"/>
</dbReference>
<dbReference type="GO" id="GO:0061640">
    <property type="term" value="P:cytoskeleton-dependent cytokinesis"/>
    <property type="evidence" value="ECO:0000318"/>
    <property type="project" value="GO_Central"/>
</dbReference>
<dbReference type="GO" id="GO:1902857">
    <property type="term" value="P:positive regulation of non-motile cilium assembly"/>
    <property type="evidence" value="ECO:0000266"/>
    <property type="project" value="RGD"/>
</dbReference>
<dbReference type="GO" id="GO:0008104">
    <property type="term" value="P:protein localization"/>
    <property type="evidence" value="ECO:0000318"/>
    <property type="project" value="GO_Central"/>
</dbReference>
<dbReference type="CDD" id="cd01850">
    <property type="entry name" value="CDC_Septin"/>
    <property type="match status" value="1"/>
</dbReference>
<dbReference type="FunFam" id="3.40.50.300:FF:000143">
    <property type="entry name" value="septin-9 isoform X1"/>
    <property type="match status" value="1"/>
</dbReference>
<dbReference type="Gene3D" id="3.40.50.300">
    <property type="entry name" value="P-loop containing nucleotide triphosphate hydrolases"/>
    <property type="match status" value="1"/>
</dbReference>
<dbReference type="InterPro" id="IPR030379">
    <property type="entry name" value="G_SEPTIN_dom"/>
</dbReference>
<dbReference type="InterPro" id="IPR027417">
    <property type="entry name" value="P-loop_NTPase"/>
</dbReference>
<dbReference type="InterPro" id="IPR016491">
    <property type="entry name" value="Septin"/>
</dbReference>
<dbReference type="PANTHER" id="PTHR18884">
    <property type="entry name" value="SEPTIN"/>
    <property type="match status" value="1"/>
</dbReference>
<dbReference type="Pfam" id="PF00735">
    <property type="entry name" value="Septin"/>
    <property type="match status" value="1"/>
</dbReference>
<dbReference type="SUPFAM" id="SSF52540">
    <property type="entry name" value="P-loop containing nucleoside triphosphate hydrolases"/>
    <property type="match status" value="1"/>
</dbReference>
<dbReference type="PROSITE" id="PS51719">
    <property type="entry name" value="G_SEPTIN"/>
    <property type="match status" value="1"/>
</dbReference>
<protein>
    <recommendedName>
        <fullName>Septin-9</fullName>
    </recommendedName>
    <alternativeName>
        <fullName>Eighth septin</fullName>
    </alternativeName>
    <alternativeName>
        <fullName>Eseptin</fullName>
    </alternativeName>
    <alternativeName>
        <fullName>Septin-like protein</fullName>
        <shortName>SLP</shortName>
    </alternativeName>
</protein>
<comment type="function">
    <text evidence="1 12">Filament-forming cytoskeletal GTPase (By similarity). May play a role in cytokinesis (Potential).</text>
</comment>
<comment type="subunit">
    <text evidence="1">Septins polymerize into heterooligomeric protein complexes that form filaments, and associate with cellular membranes, actin filaments, and microtubules. GTPase activity is required for filament formation. Interacts with SEPTIN2, SEPTIN6, SEPTIN7, SEPTIN11 and SEPTIN14. Interacts with RTKN and ARHGEF18 (By similarity).</text>
</comment>
<comment type="subcellular location">
    <subcellularLocation>
        <location evidence="7 8">Cytoplasm</location>
        <location evidence="7 8">Cytoskeleton</location>
    </subcellularLocation>
    <text>In embryonic fibroblasts, associated with actin stress fibers. No apparent co-distribution with microtubules, but some colocalization with vimentin filaments in the perinuclear region.</text>
</comment>
<comment type="alternative products">
    <event type="alternative splicing"/>
    <isoform>
        <id>Q9QZR6-1</id>
        <name>1</name>
        <name>SLP-a</name>
        <sequence type="displayed"/>
    </isoform>
    <isoform>
        <id>Q9QZR6-2</id>
        <name>2</name>
        <name>SLP-b</name>
        <sequence type="described" ref="VSP_012345"/>
    </isoform>
    <isoform>
        <id>Q9QZR6-3</id>
        <name>3</name>
        <name>E-septin long form</name>
        <sequence type="described" ref="VSP_012344"/>
    </isoform>
    <isoform>
        <id>Q9QZR6-4</id>
        <name>4</name>
        <name>E-septin short form</name>
        <sequence type="described" ref="VSP_012343"/>
    </isoform>
</comment>
<comment type="tissue specificity">
    <text evidence="6 7 9">Expressed in the brain, mainly in the perikarya and processes of astrocytes in the cerebellum, dentate gyrus and corpus callosum (at protein level). In the sciatic nerve, highly expressed in Schwann cells (at protein level). Isoforms are differentially expressed in testes, kidney, liver, heart, spleen and brain. Undetectable in skeletal muscle.</text>
</comment>
<comment type="similarity">
    <text evidence="4">Belongs to the TRAFAC class TrmE-Era-EngA-EngB-Septin-like GTPase superfamily. Septin GTPase family.</text>
</comment>
<accession>Q9QZR6</accession>
<accession>Q9QZJ7</accession>
<accession>Q9QZJ8</accession>
<accession>Q9QZP9</accession>
<keyword id="KW-0007">Acetylation</keyword>
<keyword id="KW-0025">Alternative splicing</keyword>
<keyword id="KW-0131">Cell cycle</keyword>
<keyword id="KW-0132">Cell division</keyword>
<keyword id="KW-0963">Cytoplasm</keyword>
<keyword id="KW-0206">Cytoskeleton</keyword>
<keyword id="KW-0903">Direct protein sequencing</keyword>
<keyword id="KW-0342">GTP-binding</keyword>
<keyword id="KW-0547">Nucleotide-binding</keyword>
<keyword id="KW-0597">Phosphoprotein</keyword>
<keyword id="KW-1185">Reference proteome</keyword>
<organism>
    <name type="scientific">Rattus norvegicus</name>
    <name type="common">Rat</name>
    <dbReference type="NCBI Taxonomy" id="10116"/>
    <lineage>
        <taxon>Eukaryota</taxon>
        <taxon>Metazoa</taxon>
        <taxon>Chordata</taxon>
        <taxon>Craniata</taxon>
        <taxon>Vertebrata</taxon>
        <taxon>Euteleostomi</taxon>
        <taxon>Mammalia</taxon>
        <taxon>Eutheria</taxon>
        <taxon>Euarchontoglires</taxon>
        <taxon>Glires</taxon>
        <taxon>Rodentia</taxon>
        <taxon>Myomorpha</taxon>
        <taxon>Muroidea</taxon>
        <taxon>Muridae</taxon>
        <taxon>Murinae</taxon>
        <taxon>Rattus</taxon>
    </lineage>
</organism>
<feature type="chain" id="PRO_0000173537" description="Septin-9">
    <location>
        <begin position="1"/>
        <end position="564"/>
    </location>
</feature>
<feature type="domain" description="Septin-type G" evidence="4">
    <location>
        <begin position="275"/>
        <end position="546"/>
    </location>
</feature>
<feature type="region of interest" description="Disordered" evidence="5">
    <location>
        <begin position="38"/>
        <end position="165"/>
    </location>
</feature>
<feature type="region of interest" description="Disordered" evidence="5">
    <location>
        <begin position="178"/>
        <end position="224"/>
    </location>
</feature>
<feature type="region of interest" description="G1 motif" evidence="4">
    <location>
        <begin position="285"/>
        <end position="292"/>
    </location>
</feature>
<feature type="region of interest" description="G3 motif" evidence="4">
    <location>
        <begin position="342"/>
        <end position="345"/>
    </location>
</feature>
<feature type="region of interest" description="G4 motif" evidence="4">
    <location>
        <begin position="424"/>
        <end position="427"/>
    </location>
</feature>
<feature type="compositionally biased region" description="Polar residues" evidence="5">
    <location>
        <begin position="95"/>
        <end position="109"/>
    </location>
</feature>
<feature type="compositionally biased region" description="Basic and acidic residues" evidence="5">
    <location>
        <begin position="116"/>
        <end position="134"/>
    </location>
</feature>
<feature type="compositionally biased region" description="Polar residues" evidence="5">
    <location>
        <begin position="190"/>
        <end position="203"/>
    </location>
</feature>
<feature type="binding site" evidence="1">
    <location>
        <begin position="285"/>
        <end position="292"/>
    </location>
    <ligand>
        <name>GTP</name>
        <dbReference type="ChEBI" id="CHEBI:37565"/>
    </ligand>
</feature>
<feature type="binding site" evidence="1">
    <location>
        <position position="319"/>
    </location>
    <ligand>
        <name>GTP</name>
        <dbReference type="ChEBI" id="CHEBI:37565"/>
    </ligand>
</feature>
<feature type="binding site" evidence="1">
    <location>
        <position position="345"/>
    </location>
    <ligand>
        <name>GTP</name>
        <dbReference type="ChEBI" id="CHEBI:37565"/>
    </ligand>
</feature>
<feature type="binding site" evidence="1">
    <location>
        <begin position="425"/>
        <end position="433"/>
    </location>
    <ligand>
        <name>GTP</name>
        <dbReference type="ChEBI" id="CHEBI:37565"/>
    </ligand>
</feature>
<feature type="binding site" evidence="1">
    <location>
        <position position="480"/>
    </location>
    <ligand>
        <name>GTP</name>
        <dbReference type="ChEBI" id="CHEBI:37565"/>
    </ligand>
</feature>
<feature type="binding site" evidence="1">
    <location>
        <position position="495"/>
    </location>
    <ligand>
        <name>GTP</name>
        <dbReference type="ChEBI" id="CHEBI:37565"/>
    </ligand>
</feature>
<feature type="modified residue" description="N-acetylmethionine" evidence="3">
    <location>
        <position position="1"/>
    </location>
</feature>
<feature type="modified residue" description="Phosphoserine" evidence="15">
    <location>
        <position position="12"/>
    </location>
</feature>
<feature type="modified residue" description="Phosphothreonine" evidence="3">
    <location>
        <position position="24"/>
    </location>
</feature>
<feature type="modified residue" description="Phosphothreonine" evidence="3">
    <location>
        <position position="31"/>
    </location>
</feature>
<feature type="modified residue" description="N6-acetyllysine" evidence="2">
    <location>
        <position position="44"/>
    </location>
</feature>
<feature type="modified residue" description="Phosphoserine" evidence="3">
    <location>
        <position position="64"/>
    </location>
</feature>
<feature type="modified residue" description="Phosphoserine" evidence="14 15">
    <location>
        <position position="67"/>
    </location>
</feature>
<feature type="modified residue" description="Phosphoserine" evidence="3">
    <location>
        <position position="71"/>
    </location>
</feature>
<feature type="modified residue" description="Phosphothreonine" evidence="3">
    <location>
        <position position="125"/>
    </location>
</feature>
<feature type="modified residue" description="Phosphotyrosine" evidence="3">
    <location>
        <position position="258"/>
    </location>
</feature>
<feature type="modified residue" description="Phosphoserine" evidence="3">
    <location>
        <position position="307"/>
    </location>
</feature>
<feature type="modified residue" description="Phosphoserine" evidence="3">
    <location>
        <position position="312"/>
    </location>
</feature>
<feature type="splice variant" id="VSP_012343" description="In isoform 4." evidence="10">
    <location>
        <begin position="1"/>
        <end position="231"/>
    </location>
</feature>
<feature type="splice variant" id="VSP_012344" description="In isoform 3." evidence="10">
    <location>
        <begin position="1"/>
        <end position="160"/>
    </location>
</feature>
<feature type="splice variant" id="VSP_012345" description="In isoform 2." evidence="11">
    <location>
        <begin position="1"/>
        <end position="85"/>
    </location>
</feature>
<feature type="mutagenesis site" description="Abolishes the GTP binding." evidence="6">
    <original>G</original>
    <variation>V</variation>
    <location>
        <position position="288"/>
    </location>
</feature>
<feature type="sequence conflict" description="In Ref. 1; AAF01206." evidence="12" ref="1">
    <original>V</original>
    <variation>G</variation>
    <location>
        <position position="230"/>
    </location>
</feature>
<feature type="sequence conflict" description="In Ref. 1; AAF01206." evidence="12" ref="1">
    <original>E</original>
    <variation>ED</variation>
    <location>
        <position position="460"/>
    </location>
</feature>
<reference key="1">
    <citation type="journal article" date="1999" name="FEBS Lett.">
        <title>Identification of a novel alternatively spliced septin.</title>
        <authorList>
            <person name="Fung E.T."/>
            <person name="Scheller R.H."/>
        </authorList>
    </citation>
    <scope>NUCLEOTIDE SEQUENCE [MRNA] (ISOFORMS 3 AND 4)</scope>
    <scope>TISSUE SPECIFICITY</scope>
    <scope>ALTERNATIVE SPLICING</scope>
    <scope>MUTAGENESIS OF GLY-288</scope>
    <source>
        <tissue>Brain</tissue>
    </source>
</reference>
<reference key="2">
    <citation type="journal article" date="2000" name="Biochem. Biophys. Res. Commun.">
        <title>Alternative exon usage of rat septins.</title>
        <authorList>
            <person name="Jackisch B.O."/>
            <person name="Hausser H."/>
            <person name="Schaefer L."/>
            <person name="Kappler J."/>
            <person name="Muller H.W."/>
            <person name="Kresse H."/>
        </authorList>
    </citation>
    <scope>NUCLEOTIDE SEQUENCE [MRNA] (ISOFORMS 1 AND 2)</scope>
    <scope>SUBCELLULAR LOCATION</scope>
    <scope>TISSUE SPECIFICITY</scope>
    <scope>ALTERNATIVE SPLICING</scope>
    <source>
        <tissue>Mesangial cell</tissue>
    </source>
</reference>
<reference key="3">
    <citation type="submission" date="2007-07" db="UniProtKB">
        <authorList>
            <person name="Lubec G."/>
            <person name="Kang S.U."/>
        </authorList>
    </citation>
    <scope>PROTEIN SEQUENCE OF 292-300</scope>
    <scope>IDENTIFICATION BY MASS SPECTROMETRY</scope>
    <source>
        <strain>Sprague-Dawley</strain>
        <tissue>Brain</tissue>
    </source>
</reference>
<reference key="4">
    <citation type="journal article" date="2004" name="J. Biol. Chem.">
        <title>Biochemical and cell biological analyses of a mammalian septin complex, Sept7/9b/11.</title>
        <authorList>
            <person name="Nagata K."/>
            <person name="Asano T."/>
            <person name="Nozawa Y."/>
            <person name="Inagaki M."/>
        </authorList>
    </citation>
    <scope>SUBCELLULAR LOCATION</scope>
    <scope>INTERACTION WITH SEPTIN7</scope>
</reference>
<reference key="5">
    <citation type="journal article" date="2006" name="Proc. Natl. Acad. Sci. U.S.A.">
        <title>Quantitative phosphoproteomics of vasopressin-sensitive renal cells: regulation of aquaporin-2 phosphorylation at two sites.</title>
        <authorList>
            <person name="Hoffert J.D."/>
            <person name="Pisitkun T."/>
            <person name="Wang G."/>
            <person name="Shen R.-F."/>
            <person name="Knepper M.A."/>
        </authorList>
    </citation>
    <scope>PHOSPHORYLATION [LARGE SCALE ANALYSIS] AT SER-67</scope>
    <scope>IDENTIFICATION BY MASS SPECTROMETRY [LARGE SCALE ANALYSIS]</scope>
</reference>
<reference key="6">
    <citation type="journal article" date="2007" name="Hum. Mutat.">
        <title>SEPT9 sequence alternations causing hereditary neuralgic amyotrophy are associated with altered interactions with SEPT4/SEPT11 and resistance to Rho/Rhotekin-signaling.</title>
        <authorList>
            <person name="Sudo K."/>
            <person name="Ito H."/>
            <person name="Iwamoto I."/>
            <person name="Morishita R."/>
            <person name="Asano T."/>
            <person name="Nagata K."/>
        </authorList>
    </citation>
    <scope>TISSUE SPECIFICITY</scope>
</reference>
<reference key="7">
    <citation type="journal article" date="2007" name="Mamm. Genome">
        <title>Characterization of a SEPT9 interacting protein, SEPT14, a novel testis-specific septin.</title>
        <authorList>
            <person name="Peterson E.A."/>
            <person name="Kalikin L.M."/>
            <person name="Steels J.D."/>
            <person name="Estey M.P."/>
            <person name="Trimble W.S."/>
            <person name="Petty E.M."/>
        </authorList>
    </citation>
    <scope>INTERACTION WITH SEPTIN14</scope>
</reference>
<reference key="8">
    <citation type="journal article" date="2012" name="Nat. Commun.">
        <title>Quantitative maps of protein phosphorylation sites across 14 different rat organs and tissues.</title>
        <authorList>
            <person name="Lundby A."/>
            <person name="Secher A."/>
            <person name="Lage K."/>
            <person name="Nordsborg N.B."/>
            <person name="Dmytriyev A."/>
            <person name="Lundby C."/>
            <person name="Olsen J.V."/>
        </authorList>
    </citation>
    <scope>PHOSPHORYLATION [LARGE SCALE ANALYSIS] AT SER-12 AND SER-67</scope>
    <scope>IDENTIFICATION BY MASS SPECTROMETRY [LARGE SCALE ANALYSIS]</scope>
</reference>